<evidence type="ECO:0000255" key="1">
    <source>
        <dbReference type="HAMAP-Rule" id="MF_00298"/>
    </source>
</evidence>
<keyword id="KW-0378">Hydrolase</keyword>
<keyword id="KW-1185">Reference proteome</keyword>
<gene>
    <name evidence="1" type="primary">rppH</name>
    <name evidence="1" type="synonym">nudH</name>
    <name type="ordered locus">FTL_1729</name>
</gene>
<proteinExistence type="inferred from homology"/>
<dbReference type="EC" id="3.6.1.-" evidence="1"/>
<dbReference type="EMBL" id="AM233362">
    <property type="protein sequence ID" value="CAJ80168.1"/>
    <property type="molecule type" value="Genomic_DNA"/>
</dbReference>
<dbReference type="RefSeq" id="WP_003017197.1">
    <property type="nucleotide sequence ID" value="NZ_CP009694.1"/>
</dbReference>
<dbReference type="SMR" id="Q2A1P2"/>
<dbReference type="KEGG" id="ftl:FTL_1729"/>
<dbReference type="Proteomes" id="UP000001944">
    <property type="component" value="Chromosome"/>
</dbReference>
<dbReference type="GO" id="GO:0016462">
    <property type="term" value="F:pyrophosphatase activity"/>
    <property type="evidence" value="ECO:0007669"/>
    <property type="project" value="UniProtKB-ARBA"/>
</dbReference>
<dbReference type="CDD" id="cd03671">
    <property type="entry name" value="NUDIX_Ap4A_hydrolase_plant_like"/>
    <property type="match status" value="1"/>
</dbReference>
<dbReference type="Gene3D" id="3.90.79.10">
    <property type="entry name" value="Nucleoside Triphosphate Pyrophosphohydrolase"/>
    <property type="match status" value="1"/>
</dbReference>
<dbReference type="HAMAP" id="MF_00298">
    <property type="entry name" value="Nudix_RppH"/>
    <property type="match status" value="1"/>
</dbReference>
<dbReference type="InterPro" id="IPR020476">
    <property type="entry name" value="Nudix_hydrolase"/>
</dbReference>
<dbReference type="InterPro" id="IPR015797">
    <property type="entry name" value="NUDIX_hydrolase-like_dom_sf"/>
</dbReference>
<dbReference type="InterPro" id="IPR020084">
    <property type="entry name" value="NUDIX_hydrolase_CS"/>
</dbReference>
<dbReference type="InterPro" id="IPR000086">
    <property type="entry name" value="NUDIX_hydrolase_dom"/>
</dbReference>
<dbReference type="InterPro" id="IPR022927">
    <property type="entry name" value="RppH"/>
</dbReference>
<dbReference type="NCBIfam" id="NF001936">
    <property type="entry name" value="PRK00714.1-3"/>
    <property type="match status" value="1"/>
</dbReference>
<dbReference type="NCBIfam" id="NF001937">
    <property type="entry name" value="PRK00714.1-4"/>
    <property type="match status" value="1"/>
</dbReference>
<dbReference type="NCBIfam" id="NF001938">
    <property type="entry name" value="PRK00714.1-5"/>
    <property type="match status" value="1"/>
</dbReference>
<dbReference type="PANTHER" id="PTHR43736">
    <property type="entry name" value="ADP-RIBOSE PYROPHOSPHATASE"/>
    <property type="match status" value="1"/>
</dbReference>
<dbReference type="PANTHER" id="PTHR43736:SF1">
    <property type="entry name" value="DIHYDRONEOPTERIN TRIPHOSPHATE DIPHOSPHATASE"/>
    <property type="match status" value="1"/>
</dbReference>
<dbReference type="Pfam" id="PF00293">
    <property type="entry name" value="NUDIX"/>
    <property type="match status" value="1"/>
</dbReference>
<dbReference type="PRINTS" id="PR00502">
    <property type="entry name" value="NUDIXFAMILY"/>
</dbReference>
<dbReference type="SUPFAM" id="SSF55811">
    <property type="entry name" value="Nudix"/>
    <property type="match status" value="1"/>
</dbReference>
<dbReference type="PROSITE" id="PS51462">
    <property type="entry name" value="NUDIX"/>
    <property type="match status" value="1"/>
</dbReference>
<dbReference type="PROSITE" id="PS00893">
    <property type="entry name" value="NUDIX_BOX"/>
    <property type="match status" value="1"/>
</dbReference>
<organism>
    <name type="scientific">Francisella tularensis subsp. holarctica (strain LVS)</name>
    <dbReference type="NCBI Taxonomy" id="376619"/>
    <lineage>
        <taxon>Bacteria</taxon>
        <taxon>Pseudomonadati</taxon>
        <taxon>Pseudomonadota</taxon>
        <taxon>Gammaproteobacteria</taxon>
        <taxon>Thiotrichales</taxon>
        <taxon>Francisellaceae</taxon>
        <taxon>Francisella</taxon>
    </lineage>
</organism>
<reference key="1">
    <citation type="submission" date="2006-03" db="EMBL/GenBank/DDBJ databases">
        <title>Complete genome sequence of Francisella tularensis LVS (Live Vaccine Strain).</title>
        <authorList>
            <person name="Chain P."/>
            <person name="Larimer F."/>
            <person name="Land M."/>
            <person name="Stilwagen S."/>
            <person name="Larsson P."/>
            <person name="Bearden S."/>
            <person name="Chu M."/>
            <person name="Oyston P."/>
            <person name="Forsman M."/>
            <person name="Andersson S."/>
            <person name="Lindler L."/>
            <person name="Titball R."/>
            <person name="Garcia E."/>
        </authorList>
    </citation>
    <scope>NUCLEOTIDE SEQUENCE [LARGE SCALE GENOMIC DNA]</scope>
    <source>
        <strain>LVS</strain>
    </source>
</reference>
<protein>
    <recommendedName>
        <fullName evidence="1">RNA pyrophosphohydrolase</fullName>
        <ecNumber evidence="1">3.6.1.-</ecNumber>
    </recommendedName>
    <alternativeName>
        <fullName evidence="1">(Di)nucleoside polyphosphate hydrolase</fullName>
    </alternativeName>
</protein>
<accession>Q2A1P2</accession>
<sequence length="155" mass="18561">MIDKSGYRANVAIVLLNKQNRVFWGQRRNRTSWQFPQGGVATGETPLQAMYRELHEEIGLRPQDVEVIASTRDWYKYDIPDSLVRTKEPICIGQKQKWFLLKLKSPESYIDLDANDSPEFDNWRWVSYWYPINHVVYFKQEVYRKALTYFKEYIA</sequence>
<comment type="function">
    <text evidence="1">Accelerates the degradation of transcripts by removing pyrophosphate from the 5'-end of triphosphorylated RNA, leading to a more labile monophosphorylated state that can stimulate subsequent ribonuclease cleavage.</text>
</comment>
<comment type="cofactor">
    <cofactor evidence="1">
        <name>a divalent metal cation</name>
        <dbReference type="ChEBI" id="CHEBI:60240"/>
    </cofactor>
</comment>
<comment type="similarity">
    <text evidence="1">Belongs to the Nudix hydrolase family. RppH subfamily.</text>
</comment>
<name>RPPH_FRATH</name>
<feature type="chain" id="PRO_1000021946" description="RNA pyrophosphohydrolase">
    <location>
        <begin position="1"/>
        <end position="155"/>
    </location>
</feature>
<feature type="domain" description="Nudix hydrolase" evidence="1">
    <location>
        <begin position="6"/>
        <end position="148"/>
    </location>
</feature>
<feature type="short sequence motif" description="Nudix box">
    <location>
        <begin position="38"/>
        <end position="59"/>
    </location>
</feature>